<name>PDHR_ECOLI</name>
<evidence type="ECO:0000255" key="1">
    <source>
        <dbReference type="PROSITE-ProRule" id="PRU00307"/>
    </source>
</evidence>
<evidence type="ECO:0000269" key="2">
    <source>
    </source>
</evidence>
<evidence type="ECO:0007829" key="3">
    <source>
        <dbReference type="PDB" id="5KVR"/>
    </source>
</evidence>
<evidence type="ECO:0007829" key="4">
    <source>
        <dbReference type="PDB" id="5TPM"/>
    </source>
</evidence>
<sequence>MAYSKIRQPKLSDVIEQQLEFLILEGTLRPGEKLPPERELAKQFDVSRPSLREAIQRLEAKGLLLRRQGGGTFVQSSLWQSFSDPLVELLSDHPESQYDLLETRHALEGIAAYYAALRSTDEDKERIRELHHAIELAQQSGDLDAESNAVLQYQIAVTEAAHNVVLLHLLRCMEPMLAQNVRQNFELLYSRREMLPLVSSHRTRIFEAIMAGKPEEAREASHRHLAFIEEILLDRSREESRRERSLRRLEQRKN</sequence>
<accession>P0ACL9</accession>
<accession>P06957</accession>
<accession>Q53381</accession>
<accession>Q8KMZ5</accession>
<protein>
    <recommendedName>
        <fullName>Pyruvate dehydrogenase complex repressor</fullName>
    </recommendedName>
</protein>
<keyword id="KW-0002">3D-structure</keyword>
<keyword id="KW-0238">DNA-binding</keyword>
<keyword id="KW-1185">Reference proteome</keyword>
<keyword id="KW-0678">Repressor</keyword>
<keyword id="KW-0804">Transcription</keyword>
<keyword id="KW-0805">Transcription regulation</keyword>
<reference key="1">
    <citation type="journal article" date="1983" name="Eur. J. Biochem.">
        <title>The pyruvate dehydrogenase complex of Escherichia coli K12. Nucleotide sequence encoding the pyruvate dehydrogenase component.</title>
        <authorList>
            <person name="Stephens P.E."/>
            <person name="Darlison M.G."/>
            <person name="Lewis H.M."/>
            <person name="Guest J.R."/>
        </authorList>
    </citation>
    <scope>NUCLEOTIDE SEQUENCE [GENOMIC DNA]</scope>
    <source>
        <strain>K12</strain>
    </source>
</reference>
<reference key="2">
    <citation type="submission" date="1993-11" db="EMBL/GenBank/DDBJ databases">
        <authorList>
            <person name="Quail M.A."/>
        </authorList>
    </citation>
    <scope>SEQUENCE REVISION</scope>
</reference>
<reference key="3">
    <citation type="journal article" date="1997" name="Science">
        <title>The complete genome sequence of Escherichia coli K-12.</title>
        <authorList>
            <person name="Blattner F.R."/>
            <person name="Plunkett G. III"/>
            <person name="Bloch C.A."/>
            <person name="Perna N.T."/>
            <person name="Burland V."/>
            <person name="Riley M."/>
            <person name="Collado-Vides J."/>
            <person name="Glasner J.D."/>
            <person name="Rode C.K."/>
            <person name="Mayhew G.F."/>
            <person name="Gregor J."/>
            <person name="Davis N.W."/>
            <person name="Kirkpatrick H.A."/>
            <person name="Goeden M.A."/>
            <person name="Rose D.J."/>
            <person name="Mau B."/>
            <person name="Shao Y."/>
        </authorList>
    </citation>
    <scope>NUCLEOTIDE SEQUENCE [LARGE SCALE GENOMIC DNA]</scope>
    <source>
        <strain>K12 / MG1655 / ATCC 47076</strain>
    </source>
</reference>
<reference key="4">
    <citation type="journal article" date="2006" name="Mol. Syst. Biol.">
        <title>Highly accurate genome sequences of Escherichia coli K-12 strains MG1655 and W3110.</title>
        <authorList>
            <person name="Hayashi K."/>
            <person name="Morooka N."/>
            <person name="Yamamoto Y."/>
            <person name="Fujita K."/>
            <person name="Isono K."/>
            <person name="Choi S."/>
            <person name="Ohtsubo E."/>
            <person name="Baba T."/>
            <person name="Wanner B.L."/>
            <person name="Mori H."/>
            <person name="Horiuchi T."/>
        </authorList>
    </citation>
    <scope>NUCLEOTIDE SEQUENCE [LARGE SCALE GENOMIC DNA]</scope>
    <source>
        <strain>K12 / W3110 / ATCC 27325 / DSM 5911</strain>
    </source>
</reference>
<reference key="5">
    <citation type="journal article" date="1993" name="FEBS Lett.">
        <title>A mutation causing constitutive synthesis of the pyruvate dehydrogenase complex in Escherichia coli is located within the pdhR gene.</title>
        <authorList>
            <person name="Haydon D.J."/>
            <person name="Quail M.A."/>
            <person name="Guest J.R."/>
        </authorList>
    </citation>
    <scope>CHARACTERIZATION</scope>
    <scope>VARIANT ACEC816 CYS-118</scope>
    <source>
        <strain>K12</strain>
    </source>
</reference>
<organism>
    <name type="scientific">Escherichia coli (strain K12)</name>
    <dbReference type="NCBI Taxonomy" id="83333"/>
    <lineage>
        <taxon>Bacteria</taxon>
        <taxon>Pseudomonadati</taxon>
        <taxon>Pseudomonadota</taxon>
        <taxon>Gammaproteobacteria</taxon>
        <taxon>Enterobacterales</taxon>
        <taxon>Enterobacteriaceae</taxon>
        <taxon>Escherichia</taxon>
    </lineage>
</organism>
<proteinExistence type="evidence at protein level"/>
<feature type="chain" id="PRO_0000050662" description="Pyruvate dehydrogenase complex repressor">
    <location>
        <begin position="1"/>
        <end position="254"/>
    </location>
</feature>
<feature type="domain" description="HTH gntR-type" evidence="1">
    <location>
        <begin position="9"/>
        <end position="77"/>
    </location>
</feature>
<feature type="DNA-binding region" description="H-T-H motif" evidence="1">
    <location>
        <begin position="37"/>
        <end position="56"/>
    </location>
</feature>
<feature type="sequence variant" description="In ACEC816; constitutively activated." evidence="2">
    <original>R</original>
    <variation>C</variation>
    <location>
        <position position="118"/>
    </location>
</feature>
<feature type="helix" evidence="3">
    <location>
        <begin position="11"/>
        <end position="24"/>
    </location>
</feature>
<feature type="helix" evidence="3">
    <location>
        <begin position="37"/>
        <end position="44"/>
    </location>
</feature>
<feature type="helix" evidence="3">
    <location>
        <begin position="48"/>
        <end position="60"/>
    </location>
</feature>
<feature type="strand" evidence="3">
    <location>
        <begin position="63"/>
        <end position="66"/>
    </location>
</feature>
<feature type="strand" evidence="3">
    <location>
        <begin position="68"/>
        <end position="70"/>
    </location>
</feature>
<feature type="strand" evidence="3">
    <location>
        <begin position="72"/>
        <end position="74"/>
    </location>
</feature>
<feature type="helix" evidence="4">
    <location>
        <begin position="99"/>
        <end position="118"/>
    </location>
</feature>
<feature type="helix" evidence="4">
    <location>
        <begin position="121"/>
        <end position="139"/>
    </location>
</feature>
<feature type="helix" evidence="4">
    <location>
        <begin position="143"/>
        <end position="160"/>
    </location>
</feature>
<feature type="helix" evidence="4">
    <location>
        <begin position="164"/>
        <end position="188"/>
    </location>
</feature>
<feature type="turn" evidence="4">
    <location>
        <begin position="192"/>
        <end position="194"/>
    </location>
</feature>
<feature type="helix" evidence="4">
    <location>
        <begin position="195"/>
        <end position="210"/>
    </location>
</feature>
<feature type="helix" evidence="4">
    <location>
        <begin position="214"/>
        <end position="248"/>
    </location>
</feature>
<dbReference type="EMBL" id="V01498">
    <property type="protein sequence ID" value="CAA24739.1"/>
    <property type="molecule type" value="Genomic_DNA"/>
</dbReference>
<dbReference type="EMBL" id="U00096">
    <property type="protein sequence ID" value="AAC73224.1"/>
    <property type="molecule type" value="Genomic_DNA"/>
</dbReference>
<dbReference type="EMBL" id="AP009048">
    <property type="protein sequence ID" value="BAB96683.2"/>
    <property type="molecule type" value="Genomic_DNA"/>
</dbReference>
<dbReference type="EMBL" id="S67363">
    <property type="protein sequence ID" value="AAB29356.1"/>
    <property type="molecule type" value="Genomic_DNA"/>
</dbReference>
<dbReference type="PIR" id="A64734">
    <property type="entry name" value="BVECA"/>
</dbReference>
<dbReference type="RefSeq" id="NP_414655.1">
    <property type="nucleotide sequence ID" value="NC_000913.3"/>
</dbReference>
<dbReference type="RefSeq" id="WP_000331776.1">
    <property type="nucleotide sequence ID" value="NZ_STEB01000010.1"/>
</dbReference>
<dbReference type="PDB" id="5KVR">
    <property type="method" value="X-ray"/>
    <property type="resolution" value="1.36 A"/>
    <property type="chains" value="A=1-75"/>
</dbReference>
<dbReference type="PDB" id="5TPM">
    <property type="method" value="X-ray"/>
    <property type="resolution" value="2.80 A"/>
    <property type="chains" value="A/B/C/D=99-254"/>
</dbReference>
<dbReference type="PDBsum" id="5KVR"/>
<dbReference type="PDBsum" id="5TPM"/>
<dbReference type="SMR" id="P0ACL9"/>
<dbReference type="BioGRID" id="4260661">
    <property type="interactions" value="130"/>
</dbReference>
<dbReference type="BioGRID" id="849227">
    <property type="interactions" value="1"/>
</dbReference>
<dbReference type="FunCoup" id="P0ACL9">
    <property type="interactions" value="156"/>
</dbReference>
<dbReference type="IntAct" id="P0ACL9">
    <property type="interactions" value="8"/>
</dbReference>
<dbReference type="STRING" id="511145.b0113"/>
<dbReference type="jPOST" id="P0ACL9"/>
<dbReference type="PaxDb" id="511145-b0113"/>
<dbReference type="EnsemblBacteria" id="AAC73224">
    <property type="protein sequence ID" value="AAC73224"/>
    <property type="gene ID" value="b0113"/>
</dbReference>
<dbReference type="GeneID" id="93777323"/>
<dbReference type="GeneID" id="944827"/>
<dbReference type="KEGG" id="ecj:JW0109"/>
<dbReference type="KEGG" id="eco:b0113"/>
<dbReference type="KEGG" id="ecoc:C3026_00470"/>
<dbReference type="PATRIC" id="fig|1411691.4.peg.2169"/>
<dbReference type="EchoBASE" id="EB1080"/>
<dbReference type="eggNOG" id="COG2186">
    <property type="taxonomic scope" value="Bacteria"/>
</dbReference>
<dbReference type="HOGENOM" id="CLU_017584_9_5_6"/>
<dbReference type="InParanoid" id="P0ACL9"/>
<dbReference type="OMA" id="ASHNDVM"/>
<dbReference type="OrthoDB" id="5450856at2"/>
<dbReference type="PhylomeDB" id="P0ACL9"/>
<dbReference type="BioCyc" id="EcoCyc:EG11088-MONOMER"/>
<dbReference type="PRO" id="PR:P0ACL9"/>
<dbReference type="Proteomes" id="UP000000625">
    <property type="component" value="Chromosome"/>
</dbReference>
<dbReference type="CollecTF" id="EXPREG_00000860"/>
<dbReference type="GO" id="GO:0003677">
    <property type="term" value="F:DNA binding"/>
    <property type="evidence" value="ECO:0007669"/>
    <property type="project" value="UniProtKB-KW"/>
</dbReference>
<dbReference type="GO" id="GO:0003700">
    <property type="term" value="F:DNA-binding transcription factor activity"/>
    <property type="evidence" value="ECO:0000314"/>
    <property type="project" value="EcoCyc"/>
</dbReference>
<dbReference type="GO" id="GO:0045892">
    <property type="term" value="P:negative regulation of DNA-templated transcription"/>
    <property type="evidence" value="ECO:0000314"/>
    <property type="project" value="EcoCyc"/>
</dbReference>
<dbReference type="GO" id="GO:0045893">
    <property type="term" value="P:positive regulation of DNA-templated transcription"/>
    <property type="evidence" value="ECO:0000314"/>
    <property type="project" value="EcoCyc"/>
</dbReference>
<dbReference type="CDD" id="cd07377">
    <property type="entry name" value="WHTH_GntR"/>
    <property type="match status" value="1"/>
</dbReference>
<dbReference type="FunFam" id="1.10.10.10:FF:000048">
    <property type="entry name" value="Pyruvate dehydrogenase complex transcriptional repressor"/>
    <property type="match status" value="1"/>
</dbReference>
<dbReference type="FunFam" id="1.20.120.530:FF:000001">
    <property type="entry name" value="Pyruvate dehydrogenase complex transcriptional repressor"/>
    <property type="match status" value="1"/>
</dbReference>
<dbReference type="Gene3D" id="1.20.120.530">
    <property type="entry name" value="GntR ligand-binding domain-like"/>
    <property type="match status" value="1"/>
</dbReference>
<dbReference type="Gene3D" id="1.10.10.10">
    <property type="entry name" value="Winged helix-like DNA-binding domain superfamily/Winged helix DNA-binding domain"/>
    <property type="match status" value="1"/>
</dbReference>
<dbReference type="InterPro" id="IPR011711">
    <property type="entry name" value="GntR_C"/>
</dbReference>
<dbReference type="InterPro" id="IPR008920">
    <property type="entry name" value="TF_FadR/GntR_C"/>
</dbReference>
<dbReference type="InterPro" id="IPR000524">
    <property type="entry name" value="Tscrpt_reg_HTH_GntR"/>
</dbReference>
<dbReference type="InterPro" id="IPR036388">
    <property type="entry name" value="WH-like_DNA-bd_sf"/>
</dbReference>
<dbReference type="InterPro" id="IPR036390">
    <property type="entry name" value="WH_DNA-bd_sf"/>
</dbReference>
<dbReference type="NCBIfam" id="NF007001">
    <property type="entry name" value="PRK09464.1"/>
    <property type="match status" value="1"/>
</dbReference>
<dbReference type="PANTHER" id="PTHR43537:SF34">
    <property type="entry name" value="PYRUVATE DEHYDROGENASE COMPLEX REPRESSOR"/>
    <property type="match status" value="1"/>
</dbReference>
<dbReference type="PANTHER" id="PTHR43537">
    <property type="entry name" value="TRANSCRIPTIONAL REGULATOR, GNTR FAMILY"/>
    <property type="match status" value="1"/>
</dbReference>
<dbReference type="Pfam" id="PF07729">
    <property type="entry name" value="FCD"/>
    <property type="match status" value="1"/>
</dbReference>
<dbReference type="Pfam" id="PF00392">
    <property type="entry name" value="GntR"/>
    <property type="match status" value="1"/>
</dbReference>
<dbReference type="PRINTS" id="PR00035">
    <property type="entry name" value="HTHGNTR"/>
</dbReference>
<dbReference type="SMART" id="SM00895">
    <property type="entry name" value="FCD"/>
    <property type="match status" value="1"/>
</dbReference>
<dbReference type="SMART" id="SM00345">
    <property type="entry name" value="HTH_GNTR"/>
    <property type="match status" value="1"/>
</dbReference>
<dbReference type="SUPFAM" id="SSF48008">
    <property type="entry name" value="GntR ligand-binding domain-like"/>
    <property type="match status" value="1"/>
</dbReference>
<dbReference type="SUPFAM" id="SSF46785">
    <property type="entry name" value="Winged helix' DNA-binding domain"/>
    <property type="match status" value="1"/>
</dbReference>
<dbReference type="PROSITE" id="PS50949">
    <property type="entry name" value="HTH_GNTR"/>
    <property type="match status" value="1"/>
</dbReference>
<gene>
    <name type="primary">pdhR</name>
    <name type="synonym">aceC</name>
    <name type="synonym">genA</name>
    <name type="synonym">yacB</name>
    <name type="ordered locus">b0113</name>
    <name type="ordered locus">JW0109</name>
</gene>
<comment type="function">
    <text>Transcriptional repressor for the pyruvate dehydrogenase complex genes aceEF and lpd.</text>
</comment>